<proteinExistence type="inferred from homology"/>
<reference key="1">
    <citation type="journal article" date="1998" name="Science">
        <title>Genome sequence of the nematode C. elegans: a platform for investigating biology.</title>
        <authorList>
            <consortium name="The C. elegans sequencing consortium"/>
        </authorList>
    </citation>
    <scope>NUCLEOTIDE SEQUENCE [LARGE SCALE GENOMIC DNA]</scope>
    <source>
        <strain>Bristol N2</strain>
    </source>
</reference>
<comment type="function">
    <text evidence="1">Electron carrier protein. The oxidized form of the cytochrome c heme group can accept an electron from the heme group of the cytochrome c1 subunit of cytochrome reductase. Cytochrome c then transfers this electron to the cytochrome oxidase complex, the final protein carrier in the mitochondrial electron-transport chain (By similarity).</text>
</comment>
<comment type="subcellular location">
    <subcellularLocation>
        <location evidence="1">Mitochondrion intermembrane space</location>
    </subcellularLocation>
    <text evidence="1">Loosely associated with the inner membrane.</text>
</comment>
<comment type="PTM">
    <text evidence="1">Binds 1 heme c group covalently per subunit.</text>
</comment>
<comment type="similarity">
    <text evidence="4">Belongs to the cytochrome c family.</text>
</comment>
<comment type="online information" name="Protein Spotlight">
    <link uri="https://www.proteinspotlight.org/back_issues/076"/>
    <text>Life shuttle - Issue 76 of November 2006</text>
</comment>
<keyword id="KW-0249">Electron transport</keyword>
<keyword id="KW-0349">Heme</keyword>
<keyword id="KW-0408">Iron</keyword>
<keyword id="KW-0479">Metal-binding</keyword>
<keyword id="KW-0496">Mitochondrion</keyword>
<keyword id="KW-1185">Reference proteome</keyword>
<keyword id="KW-0679">Respiratory chain</keyword>
<keyword id="KW-0813">Transport</keyword>
<gene>
    <name type="primary">cyc-2.2</name>
    <name type="ORF">ZC116.2</name>
</gene>
<organism>
    <name type="scientific">Caenorhabditis elegans</name>
    <dbReference type="NCBI Taxonomy" id="6239"/>
    <lineage>
        <taxon>Eukaryota</taxon>
        <taxon>Metazoa</taxon>
        <taxon>Ecdysozoa</taxon>
        <taxon>Nematoda</taxon>
        <taxon>Chromadorea</taxon>
        <taxon>Rhabditida</taxon>
        <taxon>Rhabditina</taxon>
        <taxon>Rhabditomorpha</taxon>
        <taxon>Rhabditoidea</taxon>
        <taxon>Rhabditidae</taxon>
        <taxon>Peloderinae</taxon>
        <taxon>Caenorhabditis</taxon>
    </lineage>
</organism>
<feature type="chain" id="PRO_0000108272" description="Probable cytochrome c 2.2">
    <location>
        <begin position="1"/>
        <end position="123"/>
    </location>
</feature>
<feature type="region of interest" description="Disordered" evidence="3">
    <location>
        <begin position="1"/>
        <end position="21"/>
    </location>
</feature>
<feature type="binding site" description="covalent" evidence="2">
    <location>
        <position position="30"/>
    </location>
    <ligand>
        <name>heme c</name>
        <dbReference type="ChEBI" id="CHEBI:61717"/>
    </ligand>
</feature>
<feature type="binding site" description="covalent" evidence="2">
    <location>
        <position position="33"/>
    </location>
    <ligand>
        <name>heme c</name>
        <dbReference type="ChEBI" id="CHEBI:61717"/>
    </ligand>
</feature>
<feature type="binding site" description="axial binding residue" evidence="2">
    <location>
        <position position="34"/>
    </location>
    <ligand>
        <name>heme c</name>
        <dbReference type="ChEBI" id="CHEBI:61717"/>
    </ligand>
    <ligandPart>
        <name>Fe</name>
        <dbReference type="ChEBI" id="CHEBI:18248"/>
    </ligandPart>
</feature>
<feature type="binding site" description="axial binding residue" evidence="2">
    <location>
        <position position="95"/>
    </location>
    <ligand>
        <name>heme c</name>
        <dbReference type="ChEBI" id="CHEBI:61717"/>
    </ligand>
    <ligandPart>
        <name>Fe</name>
        <dbReference type="ChEBI" id="CHEBI:18248"/>
    </ligandPart>
</feature>
<protein>
    <recommendedName>
        <fullName>Probable cytochrome c 2.2</fullName>
    </recommendedName>
</protein>
<accession>Q23240</accession>
<evidence type="ECO:0000250" key="1"/>
<evidence type="ECO:0000255" key="2">
    <source>
        <dbReference type="PROSITE-ProRule" id="PRU00433"/>
    </source>
</evidence>
<evidence type="ECO:0000256" key="3">
    <source>
        <dbReference type="SAM" id="MobiDB-lite"/>
    </source>
</evidence>
<evidence type="ECO:0000305" key="4"/>
<dbReference type="EMBL" id="Z74046">
    <property type="protein sequence ID" value="CAA98555.1"/>
    <property type="molecule type" value="Genomic_DNA"/>
</dbReference>
<dbReference type="PIR" id="T27492">
    <property type="entry name" value="T27492"/>
</dbReference>
<dbReference type="RefSeq" id="NP_506156.1">
    <property type="nucleotide sequence ID" value="NM_073755.5"/>
</dbReference>
<dbReference type="SMR" id="Q23240"/>
<dbReference type="BioGRID" id="44748">
    <property type="interactions" value="12"/>
</dbReference>
<dbReference type="FunCoup" id="Q23240">
    <property type="interactions" value="862"/>
</dbReference>
<dbReference type="STRING" id="6239.ZC116.2.1"/>
<dbReference type="PaxDb" id="6239-ZC116.2"/>
<dbReference type="PeptideAtlas" id="Q23240"/>
<dbReference type="EnsemblMetazoa" id="ZC116.2.1">
    <property type="protein sequence ID" value="ZC116.2.1"/>
    <property type="gene ID" value="WBGene00013854"/>
</dbReference>
<dbReference type="GeneID" id="179728"/>
<dbReference type="KEGG" id="cel:CELE_ZC116.2"/>
<dbReference type="AGR" id="WB:WBGene00013854"/>
<dbReference type="CTD" id="179728"/>
<dbReference type="WormBase" id="ZC116.2">
    <property type="protein sequence ID" value="CE06565"/>
    <property type="gene ID" value="WBGene00013854"/>
    <property type="gene designation" value="cyc-2.2"/>
</dbReference>
<dbReference type="eggNOG" id="KOG3453">
    <property type="taxonomic scope" value="Eukaryota"/>
</dbReference>
<dbReference type="GeneTree" id="ENSGT00940000168884"/>
<dbReference type="HOGENOM" id="CLU_060944_3_1_1"/>
<dbReference type="InParanoid" id="Q23240"/>
<dbReference type="OMA" id="MPAPYKK"/>
<dbReference type="OrthoDB" id="449280at2759"/>
<dbReference type="PhylomeDB" id="Q23240"/>
<dbReference type="Reactome" id="R-CEL-111457">
    <property type="pathway name" value="Release of apoptotic factors from the mitochondria"/>
</dbReference>
<dbReference type="Reactome" id="R-CEL-3299685">
    <property type="pathway name" value="Detoxification of Reactive Oxygen Species"/>
</dbReference>
<dbReference type="Reactome" id="R-CEL-5620971">
    <property type="pathway name" value="Pyroptosis"/>
</dbReference>
<dbReference type="Reactome" id="R-CEL-611105">
    <property type="pathway name" value="Respiratory electron transport"/>
</dbReference>
<dbReference type="PRO" id="PR:Q23240"/>
<dbReference type="Proteomes" id="UP000001940">
    <property type="component" value="Chromosome V"/>
</dbReference>
<dbReference type="Bgee" id="WBGene00013854">
    <property type="expression patterns" value="Expressed in adult organism and 1 other cell type or tissue"/>
</dbReference>
<dbReference type="GO" id="GO:0005758">
    <property type="term" value="C:mitochondrial intermembrane space"/>
    <property type="evidence" value="ECO:0000318"/>
    <property type="project" value="GO_Central"/>
</dbReference>
<dbReference type="GO" id="GO:0009055">
    <property type="term" value="F:electron transfer activity"/>
    <property type="evidence" value="ECO:0000318"/>
    <property type="project" value="GO_Central"/>
</dbReference>
<dbReference type="GO" id="GO:0020037">
    <property type="term" value="F:heme binding"/>
    <property type="evidence" value="ECO:0007669"/>
    <property type="project" value="InterPro"/>
</dbReference>
<dbReference type="GO" id="GO:0046872">
    <property type="term" value="F:metal ion binding"/>
    <property type="evidence" value="ECO:0007669"/>
    <property type="project" value="UniProtKB-KW"/>
</dbReference>
<dbReference type="GO" id="GO:0006123">
    <property type="term" value="P:mitochondrial electron transport, cytochrome c to oxygen"/>
    <property type="evidence" value="ECO:0000318"/>
    <property type="project" value="GO_Central"/>
</dbReference>
<dbReference type="GO" id="GO:0006122">
    <property type="term" value="P:mitochondrial electron transport, ubiquinol to cytochrome c"/>
    <property type="evidence" value="ECO:0000318"/>
    <property type="project" value="GO_Central"/>
</dbReference>
<dbReference type="FunFam" id="1.10.760.10:FF:000014">
    <property type="entry name" value="Cytochrome c"/>
    <property type="match status" value="1"/>
</dbReference>
<dbReference type="Gene3D" id="1.10.760.10">
    <property type="entry name" value="Cytochrome c-like domain"/>
    <property type="match status" value="1"/>
</dbReference>
<dbReference type="InterPro" id="IPR009056">
    <property type="entry name" value="Cyt_c-like_dom"/>
</dbReference>
<dbReference type="InterPro" id="IPR036909">
    <property type="entry name" value="Cyt_c-like_dom_sf"/>
</dbReference>
<dbReference type="InterPro" id="IPR002327">
    <property type="entry name" value="Cyt_c_1A/1B"/>
</dbReference>
<dbReference type="PANTHER" id="PTHR11961">
    <property type="entry name" value="CYTOCHROME C"/>
    <property type="match status" value="1"/>
</dbReference>
<dbReference type="Pfam" id="PF00034">
    <property type="entry name" value="Cytochrom_C"/>
    <property type="match status" value="1"/>
</dbReference>
<dbReference type="PRINTS" id="PR00604">
    <property type="entry name" value="CYTCHRMECIAB"/>
</dbReference>
<dbReference type="SUPFAM" id="SSF46626">
    <property type="entry name" value="Cytochrome c"/>
    <property type="match status" value="1"/>
</dbReference>
<dbReference type="PROSITE" id="PS51007">
    <property type="entry name" value="CYTC"/>
    <property type="match status" value="1"/>
</dbReference>
<name>CYC22_CAEEL</name>
<sequence>MGKKKSDTASGGAIPEGDNEKGKKIFKQRCEQCHVVNSLQTKTGPTLNGVIGRQSGQVAGFDYSAANKNKGVVWDRQTLFDYLADPKKYIPGTKMVFAGLKKADERADLIKFIEVEAAKKPSA</sequence>